<protein>
    <recommendedName>
        <fullName evidence="1">Large ribosomal subunit protein bL20</fullName>
    </recommendedName>
    <alternativeName>
        <fullName evidence="2">50S ribosomal protein L20</fullName>
    </alternativeName>
</protein>
<sequence length="118" mass="13319">MSRVKRGVTARARHKKVLNQAKGYYGARSRVYRVAKQAVIKAGQYAYRDRKVKKRTFRSLWIVRINAAARQHDISYSQLINGLNKVGVELDRKALAELAVYNKDAFAAVVEKAKAALA</sequence>
<reference key="1">
    <citation type="journal article" date="2007" name="PLoS ONE">
        <title>Genome sequencing shows that European isolates of Francisella tularensis subspecies tularensis are almost identical to US laboratory strain Schu S4.</title>
        <authorList>
            <person name="Chaudhuri R.R."/>
            <person name="Ren C.-P."/>
            <person name="Desmond L."/>
            <person name="Vincent G.A."/>
            <person name="Silman N.J."/>
            <person name="Brehm J.K."/>
            <person name="Elmore M.J."/>
            <person name="Hudson M.J."/>
            <person name="Forsman M."/>
            <person name="Isherwood K.E."/>
            <person name="Gurycova D."/>
            <person name="Minton N.P."/>
            <person name="Titball R.W."/>
            <person name="Pallen M.J."/>
            <person name="Vipond R."/>
        </authorList>
    </citation>
    <scope>NUCLEOTIDE SEQUENCE [LARGE SCALE GENOMIC DNA]</scope>
    <source>
        <strain>FSC 198</strain>
    </source>
</reference>
<dbReference type="EMBL" id="AM286280">
    <property type="protein sequence ID" value="CAL08836.1"/>
    <property type="molecule type" value="Genomic_DNA"/>
</dbReference>
<dbReference type="RefSeq" id="WP_003020755.1">
    <property type="nucleotide sequence ID" value="NC_008245.1"/>
</dbReference>
<dbReference type="SMR" id="Q14I17"/>
<dbReference type="KEGG" id="ftf:FTF0820"/>
<dbReference type="HOGENOM" id="CLU_123265_0_1_6"/>
<dbReference type="GO" id="GO:1990904">
    <property type="term" value="C:ribonucleoprotein complex"/>
    <property type="evidence" value="ECO:0007669"/>
    <property type="project" value="UniProtKB-KW"/>
</dbReference>
<dbReference type="GO" id="GO:0005840">
    <property type="term" value="C:ribosome"/>
    <property type="evidence" value="ECO:0007669"/>
    <property type="project" value="UniProtKB-KW"/>
</dbReference>
<dbReference type="GO" id="GO:0019843">
    <property type="term" value="F:rRNA binding"/>
    <property type="evidence" value="ECO:0007669"/>
    <property type="project" value="UniProtKB-UniRule"/>
</dbReference>
<dbReference type="GO" id="GO:0003735">
    <property type="term" value="F:structural constituent of ribosome"/>
    <property type="evidence" value="ECO:0007669"/>
    <property type="project" value="InterPro"/>
</dbReference>
<dbReference type="GO" id="GO:0000027">
    <property type="term" value="P:ribosomal large subunit assembly"/>
    <property type="evidence" value="ECO:0007669"/>
    <property type="project" value="UniProtKB-UniRule"/>
</dbReference>
<dbReference type="GO" id="GO:0006412">
    <property type="term" value="P:translation"/>
    <property type="evidence" value="ECO:0007669"/>
    <property type="project" value="InterPro"/>
</dbReference>
<dbReference type="CDD" id="cd07026">
    <property type="entry name" value="Ribosomal_L20"/>
    <property type="match status" value="1"/>
</dbReference>
<dbReference type="FunFam" id="1.10.1900.20:FF:000001">
    <property type="entry name" value="50S ribosomal protein L20"/>
    <property type="match status" value="1"/>
</dbReference>
<dbReference type="Gene3D" id="6.10.160.10">
    <property type="match status" value="1"/>
</dbReference>
<dbReference type="Gene3D" id="1.10.1900.20">
    <property type="entry name" value="Ribosomal protein L20"/>
    <property type="match status" value="1"/>
</dbReference>
<dbReference type="HAMAP" id="MF_00382">
    <property type="entry name" value="Ribosomal_bL20"/>
    <property type="match status" value="1"/>
</dbReference>
<dbReference type="InterPro" id="IPR005813">
    <property type="entry name" value="Ribosomal_bL20"/>
</dbReference>
<dbReference type="InterPro" id="IPR049946">
    <property type="entry name" value="RIBOSOMAL_L20_CS"/>
</dbReference>
<dbReference type="InterPro" id="IPR035566">
    <property type="entry name" value="Ribosomal_protein_bL20_C"/>
</dbReference>
<dbReference type="NCBIfam" id="TIGR01032">
    <property type="entry name" value="rplT_bact"/>
    <property type="match status" value="1"/>
</dbReference>
<dbReference type="PANTHER" id="PTHR10986">
    <property type="entry name" value="39S RIBOSOMAL PROTEIN L20"/>
    <property type="match status" value="1"/>
</dbReference>
<dbReference type="Pfam" id="PF00453">
    <property type="entry name" value="Ribosomal_L20"/>
    <property type="match status" value="1"/>
</dbReference>
<dbReference type="PRINTS" id="PR00062">
    <property type="entry name" value="RIBOSOMALL20"/>
</dbReference>
<dbReference type="SUPFAM" id="SSF74731">
    <property type="entry name" value="Ribosomal protein L20"/>
    <property type="match status" value="1"/>
</dbReference>
<dbReference type="PROSITE" id="PS00937">
    <property type="entry name" value="RIBOSOMAL_L20"/>
    <property type="match status" value="1"/>
</dbReference>
<accession>Q14I17</accession>
<name>RL20_FRAT1</name>
<proteinExistence type="inferred from homology"/>
<keyword id="KW-0687">Ribonucleoprotein</keyword>
<keyword id="KW-0689">Ribosomal protein</keyword>
<keyword id="KW-0694">RNA-binding</keyword>
<keyword id="KW-0699">rRNA-binding</keyword>
<evidence type="ECO:0000255" key="1">
    <source>
        <dbReference type="HAMAP-Rule" id="MF_00382"/>
    </source>
</evidence>
<evidence type="ECO:0000305" key="2"/>
<organism>
    <name type="scientific">Francisella tularensis subsp. tularensis (strain FSC 198)</name>
    <dbReference type="NCBI Taxonomy" id="393115"/>
    <lineage>
        <taxon>Bacteria</taxon>
        <taxon>Pseudomonadati</taxon>
        <taxon>Pseudomonadota</taxon>
        <taxon>Gammaproteobacteria</taxon>
        <taxon>Thiotrichales</taxon>
        <taxon>Francisellaceae</taxon>
        <taxon>Francisella</taxon>
    </lineage>
</organism>
<gene>
    <name evidence="1" type="primary">rplT</name>
    <name type="ordered locus">FTF0820</name>
</gene>
<comment type="function">
    <text evidence="1">Binds directly to 23S ribosomal RNA and is necessary for the in vitro assembly process of the 50S ribosomal subunit. It is not involved in the protein synthesizing functions of that subunit.</text>
</comment>
<comment type="similarity">
    <text evidence="1">Belongs to the bacterial ribosomal protein bL20 family.</text>
</comment>
<feature type="chain" id="PRO_1000048978" description="Large ribosomal subunit protein bL20">
    <location>
        <begin position="1"/>
        <end position="118"/>
    </location>
</feature>